<gene>
    <name evidence="1" type="primary">rnfH</name>
    <name type="ordered locus">Bxeno_A2713</name>
    <name type="ORF">Bxe_A1704</name>
</gene>
<organism>
    <name type="scientific">Paraburkholderia xenovorans (strain LB400)</name>
    <dbReference type="NCBI Taxonomy" id="266265"/>
    <lineage>
        <taxon>Bacteria</taxon>
        <taxon>Pseudomonadati</taxon>
        <taxon>Pseudomonadota</taxon>
        <taxon>Betaproteobacteria</taxon>
        <taxon>Burkholderiales</taxon>
        <taxon>Burkholderiaceae</taxon>
        <taxon>Paraburkholderia</taxon>
    </lineage>
</organism>
<dbReference type="EMBL" id="CP000270">
    <property type="protein sequence ID" value="ABE31251.1"/>
    <property type="molecule type" value="Genomic_DNA"/>
</dbReference>
<dbReference type="RefSeq" id="WP_011488847.1">
    <property type="nucleotide sequence ID" value="NC_007951.1"/>
</dbReference>
<dbReference type="SMR" id="Q13XD8"/>
<dbReference type="STRING" id="266265.Bxe_A1704"/>
<dbReference type="KEGG" id="bxe:Bxe_A1704"/>
<dbReference type="PATRIC" id="fig|266265.5.peg.2842"/>
<dbReference type="eggNOG" id="COG2914">
    <property type="taxonomic scope" value="Bacteria"/>
</dbReference>
<dbReference type="OrthoDB" id="9796575at2"/>
<dbReference type="Proteomes" id="UP000001817">
    <property type="component" value="Chromosome 1"/>
</dbReference>
<dbReference type="Gene3D" id="3.10.20.280">
    <property type="entry name" value="RnfH-like"/>
    <property type="match status" value="1"/>
</dbReference>
<dbReference type="HAMAP" id="MF_00460">
    <property type="entry name" value="UPF0125_RnfH"/>
    <property type="match status" value="1"/>
</dbReference>
<dbReference type="InterPro" id="IPR016155">
    <property type="entry name" value="Mopterin_synth/thiamin_S_b"/>
</dbReference>
<dbReference type="InterPro" id="IPR005346">
    <property type="entry name" value="RnfH"/>
</dbReference>
<dbReference type="InterPro" id="IPR037021">
    <property type="entry name" value="RnfH_sf"/>
</dbReference>
<dbReference type="NCBIfam" id="NF002490">
    <property type="entry name" value="PRK01777.1"/>
    <property type="match status" value="1"/>
</dbReference>
<dbReference type="PANTHER" id="PTHR37483">
    <property type="entry name" value="UPF0125 PROTEIN RATB"/>
    <property type="match status" value="1"/>
</dbReference>
<dbReference type="PANTHER" id="PTHR37483:SF1">
    <property type="entry name" value="UPF0125 PROTEIN RATB"/>
    <property type="match status" value="1"/>
</dbReference>
<dbReference type="Pfam" id="PF03658">
    <property type="entry name" value="Ub-RnfH"/>
    <property type="match status" value="1"/>
</dbReference>
<dbReference type="SUPFAM" id="SSF54285">
    <property type="entry name" value="MoaD/ThiS"/>
    <property type="match status" value="1"/>
</dbReference>
<sequence length="110" mass="12383">MSARLSIEVCYASAGEQALIAVELPEGATLRQALDASGILRRFPQIDLDTQKVGVFGKLKPLDAVLNDHDRVEIYRPLLVDPKVSRQRRVEKTRKAGSIEGRRWQNKDSR</sequence>
<feature type="chain" id="PRO_1000013570" description="Protein RnfH">
    <location>
        <begin position="1"/>
        <end position="110"/>
    </location>
</feature>
<feature type="region of interest" description="Disordered" evidence="2">
    <location>
        <begin position="86"/>
        <end position="110"/>
    </location>
</feature>
<feature type="compositionally biased region" description="Basic and acidic residues" evidence="2">
    <location>
        <begin position="100"/>
        <end position="110"/>
    </location>
</feature>
<name>RNFH_PARXL</name>
<keyword id="KW-1185">Reference proteome</keyword>
<accession>Q13XD8</accession>
<proteinExistence type="inferred from homology"/>
<protein>
    <recommendedName>
        <fullName evidence="1">Protein RnfH</fullName>
    </recommendedName>
</protein>
<evidence type="ECO:0000255" key="1">
    <source>
        <dbReference type="HAMAP-Rule" id="MF_00460"/>
    </source>
</evidence>
<evidence type="ECO:0000256" key="2">
    <source>
        <dbReference type="SAM" id="MobiDB-lite"/>
    </source>
</evidence>
<reference key="1">
    <citation type="journal article" date="2006" name="Proc. Natl. Acad. Sci. U.S.A.">
        <title>Burkholderia xenovorans LB400 harbors a multi-replicon, 9.73-Mbp genome shaped for versatility.</title>
        <authorList>
            <person name="Chain P.S.G."/>
            <person name="Denef V.J."/>
            <person name="Konstantinidis K.T."/>
            <person name="Vergez L.M."/>
            <person name="Agullo L."/>
            <person name="Reyes V.L."/>
            <person name="Hauser L."/>
            <person name="Cordova M."/>
            <person name="Gomez L."/>
            <person name="Gonzalez M."/>
            <person name="Land M."/>
            <person name="Lao V."/>
            <person name="Larimer F."/>
            <person name="LiPuma J.J."/>
            <person name="Mahenthiralingam E."/>
            <person name="Malfatti S.A."/>
            <person name="Marx C.J."/>
            <person name="Parnell J.J."/>
            <person name="Ramette A."/>
            <person name="Richardson P."/>
            <person name="Seeger M."/>
            <person name="Smith D."/>
            <person name="Spilker T."/>
            <person name="Sul W.J."/>
            <person name="Tsoi T.V."/>
            <person name="Ulrich L.E."/>
            <person name="Zhulin I.B."/>
            <person name="Tiedje J.M."/>
        </authorList>
    </citation>
    <scope>NUCLEOTIDE SEQUENCE [LARGE SCALE GENOMIC DNA]</scope>
    <source>
        <strain>LB400</strain>
    </source>
</reference>
<comment type="similarity">
    <text evidence="1">Belongs to the UPF0125 (RnfH) family.</text>
</comment>